<sequence>MTSTTSKVTFGKSIGFRKELNRRVNAYLEAENISPRDNPPMYLKTAIILAWVVSAWTFVVFGPDVLWMKLLGCIVLGFGVSAVGFNISHDGNHGGYSKYQWVNYLSGLTHDAIGVSSYLWKFRHNVLHHTYTNILGHDVEIHGDELVRMSPSMEYRWYHRYQHWFIWFVYPFIPYYWSIADVQTMLFKRQYHDHEIPSPTWVDIATLLAFKAFGVAVFLIIPIAVGYSPLEAVIGASIVYMTHGLVACVVFMLAHVIEPAEFLDPDNLHIDDEWAIAQVKTTVDFAPNNPIINWYVGGLNYQTVHHLFPHICHIHYPKIAPILAEVCEEFGVNYAVHQTFFGALAANYSWLKKMSINPETKAIEQLTV</sequence>
<comment type="function">
    <text evidence="3 4 6 7">Desaturase involved in fatty acid biosynthesis (PubMed:15241633, PubMed:15560373, PubMed:16328883). Introduces a double bond at carbon 6 of linoleoyl group (18:2) attached to the sn-1 position of the glycerol moiety of membrane glycerolipids, leading to the formation of gamma-linolenic acid (GLA) (PubMed:15241633, PubMed:15560373, PubMed:16328883, PubMed:16575563).</text>
</comment>
<comment type="catalytic activity">
    <reaction evidence="3 4">
        <text>a 1-[(9Z,12Z)-octadecdienoyl]-2-acyl-glycerolipid + 2 reduced [2Fe-2S]-[ferredoxin] + O2 + 2 H(+) = a 1-[(6Z,9Z,12Z)-octadectrienoyl]-2-acyl-glycerolipid + 2 oxidized [2Fe-2S]-[ferredoxin] + 2 H2O</text>
        <dbReference type="Rhea" id="RHEA:46780"/>
        <dbReference type="Rhea" id="RHEA-COMP:10000"/>
        <dbReference type="Rhea" id="RHEA-COMP:10001"/>
        <dbReference type="ChEBI" id="CHEBI:15377"/>
        <dbReference type="ChEBI" id="CHEBI:15378"/>
        <dbReference type="ChEBI" id="CHEBI:15379"/>
        <dbReference type="ChEBI" id="CHEBI:33737"/>
        <dbReference type="ChEBI" id="CHEBI:33738"/>
        <dbReference type="ChEBI" id="CHEBI:87010"/>
        <dbReference type="ChEBI" id="CHEBI:87017"/>
        <dbReference type="EC" id="1.14.19.46"/>
    </reaction>
    <physiologicalReaction direction="left-to-right" evidence="3 4">
        <dbReference type="Rhea" id="RHEA:46781"/>
    </physiologicalReaction>
</comment>
<comment type="cofactor">
    <cofactor evidence="1">
        <name>Fe(2+)</name>
        <dbReference type="ChEBI" id="CHEBI:29033"/>
    </cofactor>
</comment>
<comment type="activity regulation">
    <text evidence="8">Activity requires ferredoxin, which is the natural electron donor, or cytochrome b5 (PubMed:17160624). In addition, activity is increased in the presence of the intermediate electron donors, NADPH and FADH(2) (PubMed:17160624).</text>
</comment>
<comment type="biophysicochemical properties">
    <kinetics>
        <KM evidence="3">500 uM for linoleate</KM>
    </kinetics>
</comment>
<comment type="pathway">
    <text evidence="13">Lipid metabolism; polyunsaturated fatty acid biosynthesis.</text>
</comment>
<comment type="subcellular location">
    <subcellularLocation>
        <location evidence="5">Cell inner membrane</location>
        <topology evidence="2">Multi-pass membrane protein</topology>
    </subcellularLocation>
    <subcellularLocation>
        <location evidence="5">Cellular thylakoid membrane</location>
        <topology evidence="2">Multi-pass membrane protein</topology>
    </subcellularLocation>
</comment>
<comment type="induction">
    <text evidence="5">Expression increases approximately threefold after lowering the growth temperature from 35 to 22 degrees Celsius.</text>
</comment>
<comment type="domain">
    <text evidence="1">The histidine box domains are involved in binding the catalytic metal ions.</text>
</comment>
<comment type="miscellaneous">
    <text evidence="3 4 6 7">Cyanobacterial desaturases use ferredoxin as an electron donor (PubMed:15241633). The enzyme cannot function in the in vivo system of E.coli, although it can function when ferredoxin is provided in vitro (PubMed:15560373). This is probably due to the low level of ferredoxin present in E.coli cells (PubMed:15560373). However, the enzyme is functional when expressed in S.cerevisiae, suggesting that baker's yeast has a cofactor that can complement ferredoxin, probably cytochrome b5, which is absent in E.coli and cyanobacteria (PubMed:16328883). The enzyme is in fact functional when it is fused with or coexpressed with fungal cytochrome b5 in E.coli cells (PubMed:16575563).</text>
</comment>
<comment type="similarity">
    <text evidence="11">Belongs to the fatty acid desaturase type 2 family.</text>
</comment>
<reference key="1">
    <citation type="submission" date="1995-05" db="EMBL/GenBank/DDBJ databases">
        <authorList>
            <person name="Tasaka Y."/>
        </authorList>
    </citation>
    <scope>NUCLEOTIDE SEQUENCE [GENOMIC DNA]</scope>
    <source>
        <strain>Italy</strain>
    </source>
</reference>
<reference key="2">
    <citation type="journal article" date="2003" name="J. Biosci. Bioeng.">
        <title>Differential responses of three acyl-lipid desaturases to immediate temperature reduction occurring in two lipid membranes of Spirulina platensis strain C1.</title>
        <authorList>
            <person name="Hongsthong A."/>
            <person name="Deshnium P."/>
            <person name="Paithoonrangsarid K."/>
            <person name="Cheevadhanarak S."/>
            <person name="Tanticharoen M."/>
        </authorList>
    </citation>
    <scope>SUBCELLULAR LOCATION</scope>
    <scope>INDUCTION</scope>
    <source>
        <strain>C1</strain>
    </source>
</reference>
<reference key="3">
    <citation type="journal article" date="2004" name="Appl. Microbiol. Biotechnol.">
        <title>Mutation study of conserved amino acid residues of Spirulina delta 6-acyl-lipid desaturase showing involvement of histidine 313 in the regioselectivity of the enzyme.</title>
        <authorList>
            <person name="Hongsthong A."/>
            <person name="Subudhi S."/>
            <person name="Sirijuntarat M."/>
            <person name="Cheevadhanarak S."/>
        </authorList>
    </citation>
    <scope>FUNCTION</scope>
    <scope>CATALYTIC ACTIVITY</scope>
    <scope>BIOPHYSICOCHEMICAL PROPERTIES</scope>
    <scope>MUTAGENESIS OF HIS-89; HIS-93; ARG-123; HIS-124; HIS-128; HIS-129; GLY-136; ASP-138; GLU-140; TRP-294; HIS-305; HIS-306; HIS-313 AND HIS-315</scope>
    <source>
        <strain>C1</strain>
    </source>
</reference>
<reference key="4">
    <citation type="journal article" date="2004" name="Mol. Biol. Rep.">
        <title>The expression of three desaturase genes of Spirulina platensis in Escherichia coli DH5alpha. Heterologous expression of Spirulina-desaturase genes.</title>
        <authorList>
            <person name="Apiradee H."/>
            <person name="Kalyanee P."/>
            <person name="Pongsathon P."/>
            <person name="Patcharaporn D."/>
            <person name="Matura S."/>
            <person name="Sanjukta S."/>
            <person name="Supapon C."/>
            <person name="Morakot T."/>
        </authorList>
    </citation>
    <scope>FUNCTION</scope>
    <scope>CATALYTIC ACTIVITY</scope>
    <source>
        <strain>C1</strain>
    </source>
</reference>
<reference key="5">
    <citation type="journal article" date="2005" name="Mol. Biol. Rep.">
        <title>Functional expression of Spirulina-Delta6 desaturase gene in yeast, Saccharomyces cerevisiae.</title>
        <authorList>
            <person name="Kurdrid P."/>
            <person name="Subudhi S."/>
            <person name="Hongsthong A."/>
            <person name="Ruengjitchatchawalya M."/>
            <person name="Tanticharoen M."/>
        </authorList>
    </citation>
    <scope>FUNCTION</scope>
    <scope>MUTAGENESIS OF HIS-89; HIS-129 AND HIS-305</scope>
</reference>
<reference key="6">
    <citation type="journal article" date="2006" name="Appl. Microbiol. Biotechnol.">
        <title>Revealing the complementation of ferredoxin by cytochrome b (5) in the Spirulina- (6)-desaturation reaction by N-terminal fusion and co-expression of the fungal-cytochrome b (5) domain and Spirulina- (6)-acyl-lipid desaturase.</title>
        <authorList>
            <person name="Hongsthong A."/>
            <person name="Subudhi S."/>
            <person name="Sirijuntarut M."/>
            <person name="Kurdrid P."/>
            <person name="Cheevadhanarak S."/>
            <person name="Tanticharoen M."/>
        </authorList>
    </citation>
    <scope>FUNCTION</scope>
</reference>
<reference key="7">
    <citation type="journal article" date="2007" name="Mol. Biol. Rep.">
        <title>Effect of two intermediate electron donors, NADPH and FADH(2), on Spirulina Delta (6)-desaturase co-expressed with two different immediate electron donors, cytochrome b (5) and ferredoxin, in Escherichia coli.</title>
        <authorList>
            <person name="Kurdrid P."/>
            <person name="Subudhi S."/>
            <person name="Cheevadhanarak S."/>
            <person name="Tanticharoen M."/>
            <person name="Hongsthong A."/>
        </authorList>
    </citation>
    <scope>ACTIVITY REGULATION</scope>
</reference>
<accession>Q54795</accession>
<organism>
    <name type="scientific">Arthrospira platensis</name>
    <name type="common">Spirulina platensis</name>
    <dbReference type="NCBI Taxonomy" id="118562"/>
    <lineage>
        <taxon>Bacteria</taxon>
        <taxon>Bacillati</taxon>
        <taxon>Cyanobacteriota</taxon>
        <taxon>Cyanophyceae</taxon>
        <taxon>Oscillatoriophycideae</taxon>
        <taxon>Oscillatoriales</taxon>
        <taxon>Microcoleaceae</taxon>
        <taxon>Arthrospira</taxon>
    </lineage>
</organism>
<feature type="chain" id="PRO_0000459819" description="sn-1 linoleoyl-lipid 6-desaturase">
    <location>
        <begin position="1"/>
        <end position="368"/>
    </location>
</feature>
<feature type="transmembrane region" description="Helical" evidence="2">
    <location>
        <begin position="47"/>
        <end position="67"/>
    </location>
</feature>
<feature type="transmembrane region" description="Helical" evidence="2">
    <location>
        <begin position="68"/>
        <end position="88"/>
    </location>
</feature>
<feature type="transmembrane region" description="Helical" evidence="2">
    <location>
        <begin position="164"/>
        <end position="184"/>
    </location>
</feature>
<feature type="transmembrane region" description="Helical" evidence="2">
    <location>
        <begin position="204"/>
        <end position="224"/>
    </location>
</feature>
<feature type="transmembrane region" description="Helical" evidence="2">
    <location>
        <begin position="233"/>
        <end position="253"/>
    </location>
</feature>
<feature type="short sequence motif" description="Histidine box-1" evidence="12">
    <location>
        <begin position="89"/>
        <end position="93"/>
    </location>
</feature>
<feature type="short sequence motif" description="Histidine box-2" evidence="12">
    <location>
        <begin position="124"/>
        <end position="129"/>
    </location>
</feature>
<feature type="short sequence motif" description="Histidine box-3" evidence="12">
    <location>
        <begin position="305"/>
        <end position="309"/>
    </location>
</feature>
<feature type="site" description="Important for the regioselectivity of the enzyme" evidence="12">
    <location>
        <position position="313"/>
    </location>
</feature>
<feature type="mutagenesis site" description="Strong decrease in delta-6 desaturase activity." evidence="6">
    <original>H</original>
    <variation>G</variation>
    <location>
        <position position="89"/>
    </location>
</feature>
<feature type="mutagenesis site" description="Loss or strong decrease of delta-6 desaturase activity." evidence="3 6">
    <original>H</original>
    <variation>R</variation>
    <location>
        <position position="89"/>
    </location>
</feature>
<feature type="mutagenesis site" description="Retains 11% of delta-6 desaturase activity." evidence="3">
    <original>H</original>
    <variation>R</variation>
    <location>
        <position position="93"/>
    </location>
</feature>
<feature type="mutagenesis site" description="Retains 91% of delta-6 desaturase activity." evidence="3">
    <original>R</original>
    <variation>N</variation>
    <location>
        <position position="123"/>
    </location>
</feature>
<feature type="mutagenesis site" description="Loss of delta-6 desaturase activity." evidence="3">
    <original>H</original>
    <variation>R</variation>
    <location>
        <position position="124"/>
    </location>
</feature>
<feature type="mutagenesis site" description="Loss of delta-6 desaturase activity." evidence="3">
    <original>H</original>
    <variation>R</variation>
    <location>
        <position position="128"/>
    </location>
</feature>
<feature type="mutagenesis site" description="Loss of delta-6 desaturase activity." evidence="6">
    <original>H</original>
    <variation>G</variation>
    <location>
        <position position="129"/>
    </location>
</feature>
<feature type="mutagenesis site" description="Loss of delta-6 desaturase activity." evidence="3 6">
    <original>H</original>
    <variation>R</variation>
    <location>
        <position position="129"/>
    </location>
</feature>
<feature type="mutagenesis site" description="Loss of delta-6 desaturase activity." evidence="3">
    <original>G</original>
    <variation>H</variation>
    <location>
        <position position="136"/>
    </location>
</feature>
<feature type="mutagenesis site" description="Loss of delta-6 desaturase activity." evidence="3">
    <original>D</original>
    <variation>N</variation>
    <location>
        <position position="138"/>
    </location>
</feature>
<feature type="mutagenesis site" description="Loss of delta-6 desaturase activity." evidence="3">
    <original>E</original>
    <variation>Q</variation>
    <location>
        <position position="140"/>
    </location>
</feature>
<feature type="mutagenesis site" description="Loss of delta-6 desaturase activity." evidence="3">
    <original>W</original>
    <variation>G</variation>
    <location>
        <position position="294"/>
    </location>
</feature>
<feature type="mutagenesis site" description="Loss of delta-6 desaturase activity." evidence="6">
    <original>H</original>
    <variation>G</variation>
    <location>
        <position position="305"/>
    </location>
</feature>
<feature type="mutagenesis site" description="Retains 17% of delta-6 desaturase activity. According to PubMed:16328883, loss of delta-6 desaturase activity when expressed in S.cerevisiae." evidence="3 6">
    <original>H</original>
    <variation>R</variation>
    <location>
        <position position="305"/>
    </location>
</feature>
<feature type="mutagenesis site" description="Loss of delta-6 desaturase activity." evidence="3">
    <original>H</original>
    <variation>R</variation>
    <location>
        <position position="306"/>
    </location>
</feature>
<feature type="mutagenesis site" description="Loss of delta-6 desaturase activity. Can introduce a double bond at the carbon 15 position." evidence="3">
    <original>H</original>
    <variation>R</variation>
    <location>
        <position position="313"/>
    </location>
</feature>
<feature type="mutagenesis site" description="Loss of delta-6 desaturase activity." evidence="3">
    <original>H</original>
    <variation>R</variation>
    <location>
        <position position="315"/>
    </location>
</feature>
<evidence type="ECO:0000250" key="1">
    <source>
        <dbReference type="UniProtKB" id="O00767"/>
    </source>
</evidence>
<evidence type="ECO:0000255" key="2"/>
<evidence type="ECO:0000269" key="3">
    <source>
    </source>
</evidence>
<evidence type="ECO:0000269" key="4">
    <source>
    </source>
</evidence>
<evidence type="ECO:0000269" key="5">
    <source>
    </source>
</evidence>
<evidence type="ECO:0000269" key="6">
    <source>
    </source>
</evidence>
<evidence type="ECO:0000269" key="7">
    <source>
    </source>
</evidence>
<evidence type="ECO:0000269" key="8">
    <source>
    </source>
</evidence>
<evidence type="ECO:0000303" key="9">
    <source>
    </source>
</evidence>
<evidence type="ECO:0000303" key="10">
    <source>
    </source>
</evidence>
<evidence type="ECO:0000305" key="11"/>
<evidence type="ECO:0000305" key="12">
    <source>
    </source>
</evidence>
<evidence type="ECO:0000305" key="13">
    <source>
    </source>
</evidence>
<protein>
    <recommendedName>
        <fullName evidence="11">sn-1 linoleoyl-lipid 6-desaturase</fullName>
        <ecNumber evidence="3 4">1.14.19.46</ecNumber>
    </recommendedName>
    <alternativeName>
        <fullName evidence="9">Delta 6-acyl-lipid desaturase</fullName>
    </alternativeName>
    <alternativeName>
        <fullName evidence="11">Delta(6)-desaturase</fullName>
    </alternativeName>
    <alternativeName>
        <fullName evidence="9">Delta-6 desaturase</fullName>
    </alternativeName>
</protein>
<dbReference type="EC" id="1.14.19.46" evidence="3 4"/>
<dbReference type="EMBL" id="X87094">
    <property type="protein sequence ID" value="CAA60573.1"/>
    <property type="molecule type" value="Genomic_DNA"/>
</dbReference>
<dbReference type="PIR" id="S54809">
    <property type="entry name" value="S54809"/>
</dbReference>
<dbReference type="BioCyc" id="MetaCyc:MONOMER-14125"/>
<dbReference type="BRENDA" id="1.14.19.3">
    <property type="organism ID" value="5828"/>
</dbReference>
<dbReference type="UniPathway" id="UPA00658"/>
<dbReference type="GO" id="GO:0031676">
    <property type="term" value="C:plasma membrane-derived thylakoid membrane"/>
    <property type="evidence" value="ECO:0007669"/>
    <property type="project" value="UniProtKB-SubCell"/>
</dbReference>
<dbReference type="GO" id="GO:0016717">
    <property type="term" value="F:oxidoreductase activity, acting on paired donors, with oxidation of a pair of donors resulting in the reduction of molecular oxygen to two molecules of water"/>
    <property type="evidence" value="ECO:0007669"/>
    <property type="project" value="TreeGrafter"/>
</dbReference>
<dbReference type="GO" id="GO:0006636">
    <property type="term" value="P:unsaturated fatty acid biosynthetic process"/>
    <property type="evidence" value="ECO:0007669"/>
    <property type="project" value="UniProtKB-UniPathway"/>
</dbReference>
<dbReference type="CDD" id="cd03506">
    <property type="entry name" value="Delta6-FADS-like"/>
    <property type="match status" value="1"/>
</dbReference>
<dbReference type="InterPro" id="IPR005804">
    <property type="entry name" value="FA_desaturase_dom"/>
</dbReference>
<dbReference type="InterPro" id="IPR012171">
    <property type="entry name" value="Fatty_acid_desaturase"/>
</dbReference>
<dbReference type="PANTHER" id="PTHR19353:SF19">
    <property type="entry name" value="DELTA(5) FATTY ACID DESATURASE C-RELATED"/>
    <property type="match status" value="1"/>
</dbReference>
<dbReference type="PANTHER" id="PTHR19353">
    <property type="entry name" value="FATTY ACID DESATURASE 2"/>
    <property type="match status" value="1"/>
</dbReference>
<dbReference type="Pfam" id="PF00487">
    <property type="entry name" value="FA_desaturase"/>
    <property type="match status" value="1"/>
</dbReference>
<dbReference type="PIRSF" id="PIRSF015921">
    <property type="entry name" value="FA_sphinglp_des"/>
    <property type="match status" value="1"/>
</dbReference>
<keyword id="KW-0997">Cell inner membrane</keyword>
<keyword id="KW-1003">Cell membrane</keyword>
<keyword id="KW-0275">Fatty acid biosynthesis</keyword>
<keyword id="KW-0276">Fatty acid metabolism</keyword>
<keyword id="KW-0408">Iron</keyword>
<keyword id="KW-0444">Lipid biosynthesis</keyword>
<keyword id="KW-0443">Lipid metabolism</keyword>
<keyword id="KW-0472">Membrane</keyword>
<keyword id="KW-0560">Oxidoreductase</keyword>
<keyword id="KW-0793">Thylakoid</keyword>
<keyword id="KW-0812">Transmembrane</keyword>
<keyword id="KW-1133">Transmembrane helix</keyword>
<gene>
    <name evidence="10" type="primary">desD</name>
</gene>
<name>DESD_ARTPT</name>
<proteinExistence type="evidence at protein level"/>